<dbReference type="EMBL" id="U86601">
    <property type="protein sequence ID" value="AAD11547.1"/>
    <property type="molecule type" value="mRNA"/>
</dbReference>
<dbReference type="PIR" id="S50150">
    <property type="entry name" value="S50150"/>
</dbReference>
<dbReference type="RefSeq" id="NP_001075852.1">
    <property type="nucleotide sequence ID" value="NM_001082383.1"/>
</dbReference>
<dbReference type="SMR" id="O97772"/>
<dbReference type="FunCoup" id="O97772">
    <property type="interactions" value="179"/>
</dbReference>
<dbReference type="STRING" id="9986.ENSOCUP00000011577"/>
<dbReference type="GlyCosmos" id="O97772">
    <property type="glycosylation" value="3 sites, No reported glycans"/>
</dbReference>
<dbReference type="PaxDb" id="9986-ENSOCUP00000011577"/>
<dbReference type="GeneID" id="100009241"/>
<dbReference type="KEGG" id="ocu:100009241"/>
<dbReference type="CTD" id="886"/>
<dbReference type="eggNOG" id="KOG3656">
    <property type="taxonomic scope" value="Eukaryota"/>
</dbReference>
<dbReference type="InParanoid" id="O97772"/>
<dbReference type="OrthoDB" id="5987936at2759"/>
<dbReference type="Proteomes" id="UP000001811">
    <property type="component" value="Unplaced"/>
</dbReference>
<dbReference type="GO" id="GO:0005886">
    <property type="term" value="C:plasma membrane"/>
    <property type="evidence" value="ECO:0007669"/>
    <property type="project" value="UniProtKB-SubCell"/>
</dbReference>
<dbReference type="GO" id="GO:0004951">
    <property type="term" value="F:cholecystokinin receptor activity"/>
    <property type="evidence" value="ECO:0007669"/>
    <property type="project" value="InterPro"/>
</dbReference>
<dbReference type="GO" id="GO:0008188">
    <property type="term" value="F:neuropeptide receptor activity"/>
    <property type="evidence" value="ECO:0007669"/>
    <property type="project" value="TreeGrafter"/>
</dbReference>
<dbReference type="FunFam" id="1.20.1070.10:FF:000168">
    <property type="entry name" value="Cholecystokinin receptor type A"/>
    <property type="match status" value="1"/>
</dbReference>
<dbReference type="FunFam" id="1.20.1070.10:FF:000254">
    <property type="entry name" value="Cholecystokinin receptor type A"/>
    <property type="match status" value="1"/>
</dbReference>
<dbReference type="FunFam" id="4.10.670.10:FF:000001">
    <property type="entry name" value="cholecystokinin receptor type A"/>
    <property type="match status" value="1"/>
</dbReference>
<dbReference type="Gene3D" id="4.10.670.10">
    <property type="entry name" value="Cholecystokinin A receptor, N-terminal domain"/>
    <property type="match status" value="1"/>
</dbReference>
<dbReference type="Gene3D" id="1.20.1070.10">
    <property type="entry name" value="Rhodopsin 7-helix transmembrane proteins"/>
    <property type="match status" value="2"/>
</dbReference>
<dbReference type="InterPro" id="IPR009126">
    <property type="entry name" value="Cholcskin_rcpt"/>
</dbReference>
<dbReference type="InterPro" id="IPR000596">
    <property type="entry name" value="Cholcy_rcpt_A"/>
</dbReference>
<dbReference type="InterPro" id="IPR015276">
    <property type="entry name" value="CholecystokininA_recpt_N"/>
</dbReference>
<dbReference type="InterPro" id="IPR036472">
    <property type="entry name" value="CholecystokininA_recpt_N_sf"/>
</dbReference>
<dbReference type="InterPro" id="IPR000276">
    <property type="entry name" value="GPCR_Rhodpsn"/>
</dbReference>
<dbReference type="InterPro" id="IPR017452">
    <property type="entry name" value="GPCR_Rhodpsn_7TM"/>
</dbReference>
<dbReference type="PANTHER" id="PTHR24238:SF81">
    <property type="entry name" value="CHOLECYSTOKININ RECEPTOR TYPE A"/>
    <property type="match status" value="1"/>
</dbReference>
<dbReference type="PANTHER" id="PTHR24238">
    <property type="entry name" value="G-PROTEIN COUPLED RECEPTOR"/>
    <property type="match status" value="1"/>
</dbReference>
<dbReference type="Pfam" id="PF00001">
    <property type="entry name" value="7tm_1"/>
    <property type="match status" value="1"/>
</dbReference>
<dbReference type="Pfam" id="PF09193">
    <property type="entry name" value="CholecysA-Rec_N"/>
    <property type="match status" value="1"/>
</dbReference>
<dbReference type="PRINTS" id="PR01822">
    <property type="entry name" value="CCYSTOKININR"/>
</dbReference>
<dbReference type="PRINTS" id="PR00524">
    <property type="entry name" value="CCYSTOKNINAR"/>
</dbReference>
<dbReference type="PRINTS" id="PR00237">
    <property type="entry name" value="GPCRRHODOPSN"/>
</dbReference>
<dbReference type="SMART" id="SM01381">
    <property type="entry name" value="7TM_GPCR_Srsx"/>
    <property type="match status" value="1"/>
</dbReference>
<dbReference type="SUPFAM" id="SSF81321">
    <property type="entry name" value="Family A G protein-coupled receptor-like"/>
    <property type="match status" value="1"/>
</dbReference>
<dbReference type="PROSITE" id="PS00237">
    <property type="entry name" value="G_PROTEIN_RECEP_F1_1"/>
    <property type="match status" value="1"/>
</dbReference>
<dbReference type="PROSITE" id="PS50262">
    <property type="entry name" value="G_PROTEIN_RECEP_F1_2"/>
    <property type="match status" value="1"/>
</dbReference>
<name>CCKAR_RABIT</name>
<accession>O97772</accession>
<organism>
    <name type="scientific">Oryctolagus cuniculus</name>
    <name type="common">Rabbit</name>
    <dbReference type="NCBI Taxonomy" id="9986"/>
    <lineage>
        <taxon>Eukaryota</taxon>
        <taxon>Metazoa</taxon>
        <taxon>Chordata</taxon>
        <taxon>Craniata</taxon>
        <taxon>Vertebrata</taxon>
        <taxon>Euteleostomi</taxon>
        <taxon>Mammalia</taxon>
        <taxon>Eutheria</taxon>
        <taxon>Euarchontoglires</taxon>
        <taxon>Glires</taxon>
        <taxon>Lagomorpha</taxon>
        <taxon>Leporidae</taxon>
        <taxon>Oryctolagus</taxon>
    </lineage>
</organism>
<proteinExistence type="evidence at transcript level"/>
<gene>
    <name type="primary">CCKAR</name>
</gene>
<evidence type="ECO:0000250" key="1"/>
<evidence type="ECO:0000255" key="2"/>
<evidence type="ECO:0000255" key="3">
    <source>
        <dbReference type="PROSITE-ProRule" id="PRU00521"/>
    </source>
</evidence>
<evidence type="ECO:0000256" key="4">
    <source>
        <dbReference type="SAM" id="MobiDB-lite"/>
    </source>
</evidence>
<feature type="chain" id="PRO_0000069225" description="Cholecystokinin receptor type A">
    <location>
        <begin position="1"/>
        <end position="427"/>
    </location>
</feature>
<feature type="topological domain" description="Extracellular" evidence="2">
    <location>
        <begin position="1"/>
        <end position="41"/>
    </location>
</feature>
<feature type="transmembrane region" description="Helical; Name=1" evidence="2">
    <location>
        <begin position="42"/>
        <end position="67"/>
    </location>
</feature>
<feature type="topological domain" description="Cytoplasmic" evidence="2">
    <location>
        <begin position="68"/>
        <end position="77"/>
    </location>
</feature>
<feature type="transmembrane region" description="Helical; Name=2" evidence="2">
    <location>
        <begin position="78"/>
        <end position="104"/>
    </location>
</feature>
<feature type="topological domain" description="Extracellular" evidence="2">
    <location>
        <begin position="105"/>
        <end position="115"/>
    </location>
</feature>
<feature type="transmembrane region" description="Helical; Name=3" evidence="2">
    <location>
        <begin position="116"/>
        <end position="137"/>
    </location>
</feature>
<feature type="topological domain" description="Cytoplasmic" evidence="2">
    <location>
        <begin position="138"/>
        <end position="157"/>
    </location>
</feature>
<feature type="transmembrane region" description="Helical; Name=4" evidence="2">
    <location>
        <begin position="158"/>
        <end position="178"/>
    </location>
</feature>
<feature type="topological domain" description="Extracellular" evidence="2">
    <location>
        <begin position="179"/>
        <end position="210"/>
    </location>
</feature>
<feature type="transmembrane region" description="Helical; Name=5" evidence="2">
    <location>
        <begin position="211"/>
        <end position="234"/>
    </location>
</feature>
<feature type="topological domain" description="Cytoplasmic" evidence="2">
    <location>
        <begin position="235"/>
        <end position="312"/>
    </location>
</feature>
<feature type="transmembrane region" description="Helical; Name=6" evidence="2">
    <location>
        <begin position="313"/>
        <end position="333"/>
    </location>
</feature>
<feature type="topological domain" description="Extracellular" evidence="2">
    <location>
        <begin position="334"/>
        <end position="348"/>
    </location>
</feature>
<feature type="transmembrane region" description="Helical; Name=7" evidence="2">
    <location>
        <begin position="349"/>
        <end position="372"/>
    </location>
</feature>
<feature type="topological domain" description="Cytoplasmic" evidence="2">
    <location>
        <begin position="373"/>
        <end position="427"/>
    </location>
</feature>
<feature type="region of interest" description="Disordered" evidence="4">
    <location>
        <begin position="391"/>
        <end position="427"/>
    </location>
</feature>
<feature type="compositionally biased region" description="Polar residues" evidence="4">
    <location>
        <begin position="411"/>
        <end position="421"/>
    </location>
</feature>
<feature type="lipid moiety-binding region" description="S-palmitoyl cysteine" evidence="1">
    <location>
        <position position="386"/>
    </location>
</feature>
<feature type="glycosylation site" description="N-linked (GlcNAc...) asparagine" evidence="2">
    <location>
        <position position="10"/>
    </location>
</feature>
<feature type="glycosylation site" description="N-linked (GlcNAc...) asparagine" evidence="2">
    <location>
        <position position="24"/>
    </location>
</feature>
<feature type="glycosylation site" description="N-linked (GlcNAc...) asparagine" evidence="2">
    <location>
        <position position="190"/>
    </location>
</feature>
<feature type="disulfide bond" evidence="3">
    <location>
        <begin position="18"/>
        <end position="29"/>
    </location>
</feature>
<feature type="disulfide bond" evidence="3">
    <location>
        <begin position="114"/>
        <end position="196"/>
    </location>
</feature>
<protein>
    <recommendedName>
        <fullName>Cholecystokinin receptor type A</fullName>
        <shortName>CCK-A receptor</shortName>
        <shortName>CCK-AR</shortName>
    </recommendedName>
    <alternativeName>
        <fullName>Cholecystokinin-1 receptor</fullName>
        <shortName>CCK1-R</shortName>
    </alternativeName>
</protein>
<sequence>MDAVASLLGNASGIPPPCELGLDNETLFCLDQPPPSKEWQPAVQILLYSLIFLLSVLGNTLVITVLIRNKRMRTVTNIFLLSLAISDLMLCLFCMPFNLIPNLLKDFIFGSALCKTTTYLMGTSVSVSTLNLVAISLERYGAICKPLQSRVWQTKSHALKVIAATWCLSFAIMTPYPIYSNLVPFTKTNNQTANMCRFLLPSDVMQQAWHTFLLLILFLIPGIVMMVAYGMISLELYQGIKFDASQKKSAKERKASTGSGRFEDNDGCYLQRSKPTRQLELQQLSGGGGGRVSRIRSSSSAATLMAKKRVIRMLMVIVVLFFLCWMPIFSANAWRAYDTVSAERRLSGTPISFILLLSYTSSCVNPIIYCFMNRRFRLGFMATFPCCPNPGPPGPRAEAGEEEEGRTTRASLSRYSYSHMSASAPPS</sequence>
<reference key="1">
    <citation type="journal article" date="1994" name="Biochim. Biophys. Acta">
        <title>Cloning and expression of the rabbit gastric CCK-A receptor.</title>
        <authorList>
            <person name="Reuben M."/>
            <person name="Rising L."/>
            <person name="Prinz C."/>
            <person name="Hersey S."/>
            <person name="Sachs G."/>
        </authorList>
    </citation>
    <scope>NUCLEOTIDE SEQUENCE [MRNA]</scope>
</reference>
<keyword id="KW-1003">Cell membrane</keyword>
<keyword id="KW-1015">Disulfide bond</keyword>
<keyword id="KW-0297">G-protein coupled receptor</keyword>
<keyword id="KW-0325">Glycoprotein</keyword>
<keyword id="KW-0449">Lipoprotein</keyword>
<keyword id="KW-0472">Membrane</keyword>
<keyword id="KW-0564">Palmitate</keyword>
<keyword id="KW-0675">Receptor</keyword>
<keyword id="KW-1185">Reference proteome</keyword>
<keyword id="KW-0807">Transducer</keyword>
<keyword id="KW-0812">Transmembrane</keyword>
<keyword id="KW-1133">Transmembrane helix</keyword>
<comment type="function">
    <text evidence="1">Receptor for cholecystokinin. Mediates pancreatic growth and enzyme secretion, smooth muscle contraction of the gall bladder and stomach. Has a 1000-fold higher affinity for CCK rather than for gastrin. It modulates feeding and dopamine-induced behavior in the central and peripheral nervous system. This receptor mediates its action by association with G proteins that activate a phosphatidylinositol-calcium second messenger system (By similarity).</text>
</comment>
<comment type="subcellular location">
    <subcellularLocation>
        <location>Cell membrane</location>
        <topology>Multi-pass membrane protein</topology>
    </subcellularLocation>
</comment>
<comment type="similarity">
    <text evidence="3">Belongs to the G-protein coupled receptor 1 family.</text>
</comment>